<evidence type="ECO:0000255" key="1">
    <source>
        <dbReference type="HAMAP-Rule" id="MF_01718"/>
    </source>
</evidence>
<reference key="1">
    <citation type="journal article" date="2001" name="J. Bacteriol.">
        <title>Characterization of the Plesiomonas shigelloides genes encoding the heme iron utilization system.</title>
        <authorList>
            <person name="Henderson D.P."/>
            <person name="Wyckoff E.E."/>
            <person name="Rashidi C.E."/>
            <person name="Verlei H."/>
            <person name="Oldham A.L."/>
        </authorList>
    </citation>
    <scope>NUCLEOTIDE SEQUENCE [GENOMIC DNA]</scope>
</reference>
<comment type="function">
    <text evidence="1">Part of the ABC transporter complex HmuTUV involved in hemin import. Responsible for energy coupling to the transport system.</text>
</comment>
<comment type="subunit">
    <text evidence="1">The complex is composed of two ATP-binding proteins (HmuV), two transmembrane proteins (HmuU) and a solute-binding protein (HmuT).</text>
</comment>
<comment type="subcellular location">
    <subcellularLocation>
        <location evidence="1">Cell inner membrane</location>
        <topology evidence="1">Peripheral membrane protein</topology>
    </subcellularLocation>
</comment>
<comment type="similarity">
    <text evidence="1">Belongs to the ABC transporter superfamily. Heme (hemin) importer (TC 3.A.1.14.5) family.</text>
</comment>
<organism>
    <name type="scientific">Plesiomonas shigelloides</name>
    <name type="common">Aeromonas shigelloides</name>
    <dbReference type="NCBI Taxonomy" id="703"/>
    <lineage>
        <taxon>Bacteria</taxon>
        <taxon>Pseudomonadati</taxon>
        <taxon>Pseudomonadota</taxon>
        <taxon>Gammaproteobacteria</taxon>
        <taxon>Enterobacterales</taxon>
        <taxon>Enterobacteriaceae</taxon>
        <taxon>Plesiomonas</taxon>
    </lineage>
</organism>
<protein>
    <recommendedName>
        <fullName evidence="1">Hemin import ATP-binding protein HmuV</fullName>
        <ecNumber evidence="1">7.6.2.-</ecNumber>
    </recommendedName>
</protein>
<name>HMUV_PLESH</name>
<proteinExistence type="inferred from homology"/>
<gene>
    <name evidence="1" type="primary">hmuV</name>
    <name type="synonym">hugD</name>
</gene>
<sequence length="262" mass="28812">MRNLTLQRGRRQILSQLSLDLRAGELTVLLGPNGTGKSTLLKCISGEMAAQGEIRLFGQPQSQWPAPILARRMAILPQSSALSFSFLAREVVALGRLPHASGKIADEVIIQRCLQAVGAEHLADSAYTVLSGGEKQRIHFARVLAQLDEHMVDSPQTEREPTAAAPKLLMLDEPTSALDLSHQHQTLQTAQRRARQGDAVLVILHDLNLAARYADRILLLNHGQIQADGSPEEVLTAERIKQIFAFDAQVFRHPETGRLHIS</sequence>
<accession>Q93SS1</accession>
<feature type="chain" id="PRO_0000269608" description="Hemin import ATP-binding protein HmuV">
    <location>
        <begin position="1"/>
        <end position="262"/>
    </location>
</feature>
<feature type="domain" description="ABC transporter" evidence="1">
    <location>
        <begin position="1"/>
        <end position="247"/>
    </location>
</feature>
<feature type="binding site" evidence="1">
    <location>
        <begin position="31"/>
        <end position="38"/>
    </location>
    <ligand>
        <name>ATP</name>
        <dbReference type="ChEBI" id="CHEBI:30616"/>
    </ligand>
</feature>
<dbReference type="EC" id="7.6.2.-" evidence="1"/>
<dbReference type="EMBL" id="AY008342">
    <property type="protein sequence ID" value="AAK38772.1"/>
    <property type="molecule type" value="Genomic_DNA"/>
</dbReference>
<dbReference type="SMR" id="Q93SS1"/>
<dbReference type="TCDB" id="3.A.1.14.19">
    <property type="family name" value="the atp-binding cassette (abc) superfamily"/>
</dbReference>
<dbReference type="GO" id="GO:0005886">
    <property type="term" value="C:plasma membrane"/>
    <property type="evidence" value="ECO:0007669"/>
    <property type="project" value="UniProtKB-SubCell"/>
</dbReference>
<dbReference type="GO" id="GO:0005524">
    <property type="term" value="F:ATP binding"/>
    <property type="evidence" value="ECO:0007669"/>
    <property type="project" value="UniProtKB-KW"/>
</dbReference>
<dbReference type="GO" id="GO:0016887">
    <property type="term" value="F:ATP hydrolysis activity"/>
    <property type="evidence" value="ECO:0007669"/>
    <property type="project" value="InterPro"/>
</dbReference>
<dbReference type="CDD" id="cd03214">
    <property type="entry name" value="ABC_Iron-Siderophores_B12_Hemin"/>
    <property type="match status" value="1"/>
</dbReference>
<dbReference type="Gene3D" id="3.40.50.300">
    <property type="entry name" value="P-loop containing nucleotide triphosphate hydrolases"/>
    <property type="match status" value="1"/>
</dbReference>
<dbReference type="InterPro" id="IPR003593">
    <property type="entry name" value="AAA+_ATPase"/>
</dbReference>
<dbReference type="InterPro" id="IPR003439">
    <property type="entry name" value="ABC_transporter-like_ATP-bd"/>
</dbReference>
<dbReference type="InterPro" id="IPR027417">
    <property type="entry name" value="P-loop_NTPase"/>
</dbReference>
<dbReference type="NCBIfam" id="NF010068">
    <property type="entry name" value="PRK13548.1"/>
    <property type="match status" value="1"/>
</dbReference>
<dbReference type="PANTHER" id="PTHR42794">
    <property type="entry name" value="HEMIN IMPORT ATP-BINDING PROTEIN HMUV"/>
    <property type="match status" value="1"/>
</dbReference>
<dbReference type="PANTHER" id="PTHR42794:SF1">
    <property type="entry name" value="HEMIN IMPORT ATP-BINDING PROTEIN HMUV"/>
    <property type="match status" value="1"/>
</dbReference>
<dbReference type="Pfam" id="PF00005">
    <property type="entry name" value="ABC_tran"/>
    <property type="match status" value="1"/>
</dbReference>
<dbReference type="SMART" id="SM00382">
    <property type="entry name" value="AAA"/>
    <property type="match status" value="1"/>
</dbReference>
<dbReference type="SUPFAM" id="SSF52540">
    <property type="entry name" value="P-loop containing nucleoside triphosphate hydrolases"/>
    <property type="match status" value="1"/>
</dbReference>
<dbReference type="PROSITE" id="PS50893">
    <property type="entry name" value="ABC_TRANSPORTER_2"/>
    <property type="match status" value="1"/>
</dbReference>
<dbReference type="PROSITE" id="PS51261">
    <property type="entry name" value="HMUV"/>
    <property type="match status" value="1"/>
</dbReference>
<keyword id="KW-0067">ATP-binding</keyword>
<keyword id="KW-0997">Cell inner membrane</keyword>
<keyword id="KW-1003">Cell membrane</keyword>
<keyword id="KW-0472">Membrane</keyword>
<keyword id="KW-0547">Nucleotide-binding</keyword>
<keyword id="KW-1278">Translocase</keyword>
<keyword id="KW-0813">Transport</keyword>